<protein>
    <recommendedName>
        <fullName>DNA-directed RNA polymerase III subunit RPC6</fullName>
        <shortName>RNA polymerase III subunit C6</shortName>
    </recommendedName>
    <alternativeName>
        <fullName>DNA-directed RNA polymerase III subunit F</fullName>
    </alternativeName>
    <alternativeName>
        <fullName>RNA polymerase III 39 kDa subunit</fullName>
        <shortName>RPC39</shortName>
    </alternativeName>
</protein>
<feature type="initiator methionine" description="Removed" evidence="20">
    <location>
        <position position="1"/>
    </location>
</feature>
<feature type="chain" id="PRO_0000073972" description="DNA-directed RNA polymerase III subunit RPC6">
    <location>
        <begin position="2"/>
        <end position="316"/>
    </location>
</feature>
<feature type="binding site" evidence="12 14 19">
    <location>
        <position position="287"/>
    </location>
    <ligand>
        <name>[4Fe-4S] cluster</name>
        <dbReference type="ChEBI" id="CHEBI:49883"/>
    </ligand>
</feature>
<feature type="binding site" evidence="12 13 14 18 19">
    <location>
        <position position="290"/>
    </location>
    <ligand>
        <name>[4Fe-4S] cluster</name>
        <dbReference type="ChEBI" id="CHEBI:49883"/>
    </ligand>
</feature>
<feature type="binding site" evidence="12 13 18">
    <location>
        <position position="296"/>
    </location>
    <ligand>
        <name>[4Fe-4S] cluster</name>
        <dbReference type="ChEBI" id="CHEBI:49883"/>
    </ligand>
</feature>
<feature type="binding site" evidence="12 13 18">
    <location>
        <position position="307"/>
    </location>
    <ligand>
        <name>[4Fe-4S] cluster</name>
        <dbReference type="ChEBI" id="CHEBI:49883"/>
    </ligand>
</feature>
<feature type="modified residue" description="N-acetylalanine" evidence="20">
    <location>
        <position position="2"/>
    </location>
</feature>
<feature type="cross-link" description="Glycyl lysine isopeptide (Lys-Gly) (interchain with G-Cter in SUMO2)" evidence="23">
    <location>
        <position position="5"/>
    </location>
</feature>
<feature type="cross-link" description="Glycyl lysine isopeptide (Lys-Gly) (interchain with G-Cter in SUMO2)" evidence="21 22 23">
    <location>
        <position position="7"/>
    </location>
</feature>
<feature type="sequence variant" id="VAR_087291" description="In IMD101; uncertain significance; dbSNP:rs756434857." evidence="10">
    <original>R</original>
    <variation>W</variation>
    <location>
        <position position="50"/>
    </location>
</feature>
<feature type="mutagenesis site" description="Strongly impaired dsDNA-binding. No effect on interaction with POLR3C." evidence="9">
    <original>KAVK</original>
    <variation>EAVE</variation>
    <location>
        <begin position="137"/>
        <end position="140"/>
    </location>
</feature>
<feature type="mutagenesis site" description="Strongly impaired dsDNA-binding. No effect on interaction with POLR3C." evidence="9">
    <original>ESE</original>
    <variation>KSK</variation>
    <location>
        <begin position="173"/>
        <end position="175"/>
    </location>
</feature>
<feature type="sequence conflict" description="In Ref. 1; AAB63677." evidence="16" ref="1">
    <original>A</original>
    <variation>G</variation>
    <location>
        <position position="2"/>
    </location>
</feature>
<feature type="sequence conflict" description="In Ref. 1; AAB63677." evidence="16" ref="1">
    <original>HIEAQQRAVA</original>
    <variation>QYRSPAAGSS</variation>
    <location>
        <begin position="44"/>
        <end position="53"/>
    </location>
</feature>
<feature type="sequence conflict" description="In Ref. 1; AAB63677." evidence="16" ref="1">
    <original>AKEGTVGSVDGHMKLYRAVNPIIPPTGLVRAPCGLC</original>
    <variation>CKRRHSWQCRWTHETVQGSQSNHPSHRFGPGHPVDSA</variation>
    <location>
        <begin position="255"/>
        <end position="290"/>
    </location>
</feature>
<feature type="helix" evidence="26">
    <location>
        <begin position="15"/>
        <end position="28"/>
    </location>
</feature>
<feature type="helix" evidence="26">
    <location>
        <begin position="35"/>
        <end position="41"/>
    </location>
</feature>
<feature type="helix" evidence="26">
    <location>
        <begin position="47"/>
        <end position="59"/>
    </location>
</feature>
<feature type="strand" evidence="26">
    <location>
        <begin position="62"/>
        <end position="68"/>
    </location>
</feature>
<feature type="strand" evidence="26">
    <location>
        <begin position="71"/>
        <end position="76"/>
    </location>
</feature>
<feature type="strand" evidence="24">
    <location>
        <begin position="79"/>
        <end position="81"/>
    </location>
</feature>
<feature type="helix" evidence="26">
    <location>
        <begin position="89"/>
        <end position="102"/>
    </location>
</feature>
<feature type="helix" evidence="26">
    <location>
        <begin position="103"/>
        <end position="105"/>
    </location>
</feature>
<feature type="helix" evidence="26">
    <location>
        <begin position="109"/>
        <end position="116"/>
    </location>
</feature>
<feature type="helix" evidence="26">
    <location>
        <begin position="120"/>
        <end position="132"/>
    </location>
</feature>
<feature type="strand" evidence="26">
    <location>
        <begin position="135"/>
        <end position="140"/>
    </location>
</feature>
<feature type="strand" evidence="26">
    <location>
        <begin position="142"/>
        <end position="144"/>
    </location>
</feature>
<feature type="strand" evidence="26">
    <location>
        <begin position="146"/>
        <end position="155"/>
    </location>
</feature>
<feature type="turn" evidence="26">
    <location>
        <begin position="159"/>
        <end position="161"/>
    </location>
</feature>
<feature type="strand" evidence="26">
    <location>
        <begin position="165"/>
        <end position="170"/>
    </location>
</feature>
<feature type="helix" evidence="25">
    <location>
        <begin position="174"/>
        <end position="198"/>
    </location>
</feature>
<feature type="helix" evidence="25">
    <location>
        <begin position="202"/>
        <end position="209"/>
    </location>
</feature>
<feature type="helix" evidence="25">
    <location>
        <begin position="213"/>
        <end position="223"/>
    </location>
</feature>
<feature type="strand" evidence="26">
    <location>
        <begin position="226"/>
        <end position="228"/>
    </location>
</feature>
<feature type="helix" evidence="25">
    <location>
        <begin position="232"/>
        <end position="238"/>
    </location>
</feature>
<feature type="helix" evidence="25">
    <location>
        <begin position="240"/>
        <end position="244"/>
    </location>
</feature>
<feature type="strand" evidence="25">
    <location>
        <begin position="248"/>
        <end position="254"/>
    </location>
</feature>
<feature type="strand" evidence="26">
    <location>
        <begin position="256"/>
        <end position="259"/>
    </location>
</feature>
<feature type="strand" evidence="25">
    <location>
        <begin position="266"/>
        <end position="272"/>
    </location>
</feature>
<feature type="helix" evidence="25">
    <location>
        <begin position="281"/>
        <end position="284"/>
    </location>
</feature>
<feature type="helix" evidence="25">
    <location>
        <begin position="286"/>
        <end position="289"/>
    </location>
</feature>
<feature type="helix" evidence="25">
    <location>
        <begin position="293"/>
        <end position="295"/>
    </location>
</feature>
<feature type="strand" evidence="25">
    <location>
        <begin position="298"/>
        <end position="302"/>
    </location>
</feature>
<feature type="helix" evidence="25">
    <location>
        <begin position="304"/>
        <end position="306"/>
    </location>
</feature>
<feature type="helix" evidence="25">
    <location>
        <begin position="308"/>
        <end position="313"/>
    </location>
</feature>
<keyword id="KW-0002">3D-structure</keyword>
<keyword id="KW-0007">Acetylation</keyword>
<keyword id="KW-0051">Antiviral defense</keyword>
<keyword id="KW-0238">DNA-binding</keyword>
<keyword id="KW-0240">DNA-directed RNA polymerase</keyword>
<keyword id="KW-0391">Immunity</keyword>
<keyword id="KW-0399">Innate immunity</keyword>
<keyword id="KW-1017">Isopeptide bond</keyword>
<keyword id="KW-0539">Nucleus</keyword>
<keyword id="KW-1267">Proteomics identification</keyword>
<keyword id="KW-1185">Reference proteome</keyword>
<keyword id="KW-0804">Transcription</keyword>
<keyword id="KW-0832">Ubl conjugation</keyword>
<gene>
    <name evidence="17" type="primary">POLR3F</name>
</gene>
<organism>
    <name type="scientific">Homo sapiens</name>
    <name type="common">Human</name>
    <dbReference type="NCBI Taxonomy" id="9606"/>
    <lineage>
        <taxon>Eukaryota</taxon>
        <taxon>Metazoa</taxon>
        <taxon>Chordata</taxon>
        <taxon>Craniata</taxon>
        <taxon>Vertebrata</taxon>
        <taxon>Euteleostomi</taxon>
        <taxon>Mammalia</taxon>
        <taxon>Eutheria</taxon>
        <taxon>Euarchontoglires</taxon>
        <taxon>Primates</taxon>
        <taxon>Haplorrhini</taxon>
        <taxon>Catarrhini</taxon>
        <taxon>Hominidae</taxon>
        <taxon>Homo</taxon>
    </lineage>
</organism>
<name>RPC6_HUMAN</name>
<accession>Q9H1D9</accession>
<accession>A8K4C7</accession>
<accession>O15319</accession>
<proteinExistence type="evidence at protein level"/>
<reference key="1">
    <citation type="journal article" date="1997" name="Genes Dev.">
        <title>Three human RNA polymerase III-specific subunits form a subcomplex with a selective function in specific transcription initiation.</title>
        <authorList>
            <person name="Wang Z."/>
            <person name="Roeder R.G."/>
        </authorList>
    </citation>
    <scope>NUCLEOTIDE SEQUENCE [MRNA]</scope>
</reference>
<reference key="2">
    <citation type="journal article" date="2004" name="Nat. Genet.">
        <title>Complete sequencing and characterization of 21,243 full-length human cDNAs.</title>
        <authorList>
            <person name="Ota T."/>
            <person name="Suzuki Y."/>
            <person name="Nishikawa T."/>
            <person name="Otsuki T."/>
            <person name="Sugiyama T."/>
            <person name="Irie R."/>
            <person name="Wakamatsu A."/>
            <person name="Hayashi K."/>
            <person name="Sato H."/>
            <person name="Nagai K."/>
            <person name="Kimura K."/>
            <person name="Makita H."/>
            <person name="Sekine M."/>
            <person name="Obayashi M."/>
            <person name="Nishi T."/>
            <person name="Shibahara T."/>
            <person name="Tanaka T."/>
            <person name="Ishii S."/>
            <person name="Yamamoto J."/>
            <person name="Saito K."/>
            <person name="Kawai Y."/>
            <person name="Isono Y."/>
            <person name="Nakamura Y."/>
            <person name="Nagahari K."/>
            <person name="Murakami K."/>
            <person name="Yasuda T."/>
            <person name="Iwayanagi T."/>
            <person name="Wagatsuma M."/>
            <person name="Shiratori A."/>
            <person name="Sudo H."/>
            <person name="Hosoiri T."/>
            <person name="Kaku Y."/>
            <person name="Kodaira H."/>
            <person name="Kondo H."/>
            <person name="Sugawara M."/>
            <person name="Takahashi M."/>
            <person name="Kanda K."/>
            <person name="Yokoi T."/>
            <person name="Furuya T."/>
            <person name="Kikkawa E."/>
            <person name="Omura Y."/>
            <person name="Abe K."/>
            <person name="Kamihara K."/>
            <person name="Katsuta N."/>
            <person name="Sato K."/>
            <person name="Tanikawa M."/>
            <person name="Yamazaki M."/>
            <person name="Ninomiya K."/>
            <person name="Ishibashi T."/>
            <person name="Yamashita H."/>
            <person name="Murakawa K."/>
            <person name="Fujimori K."/>
            <person name="Tanai H."/>
            <person name="Kimata M."/>
            <person name="Watanabe M."/>
            <person name="Hiraoka S."/>
            <person name="Chiba Y."/>
            <person name="Ishida S."/>
            <person name="Ono Y."/>
            <person name="Takiguchi S."/>
            <person name="Watanabe S."/>
            <person name="Yosida M."/>
            <person name="Hotuta T."/>
            <person name="Kusano J."/>
            <person name="Kanehori K."/>
            <person name="Takahashi-Fujii A."/>
            <person name="Hara H."/>
            <person name="Tanase T.-O."/>
            <person name="Nomura Y."/>
            <person name="Togiya S."/>
            <person name="Komai F."/>
            <person name="Hara R."/>
            <person name="Takeuchi K."/>
            <person name="Arita M."/>
            <person name="Imose N."/>
            <person name="Musashino K."/>
            <person name="Yuuki H."/>
            <person name="Oshima A."/>
            <person name="Sasaki N."/>
            <person name="Aotsuka S."/>
            <person name="Yoshikawa Y."/>
            <person name="Matsunawa H."/>
            <person name="Ichihara T."/>
            <person name="Shiohata N."/>
            <person name="Sano S."/>
            <person name="Moriya S."/>
            <person name="Momiyama H."/>
            <person name="Satoh N."/>
            <person name="Takami S."/>
            <person name="Terashima Y."/>
            <person name="Suzuki O."/>
            <person name="Nakagawa S."/>
            <person name="Senoh A."/>
            <person name="Mizoguchi H."/>
            <person name="Goto Y."/>
            <person name="Shimizu F."/>
            <person name="Wakebe H."/>
            <person name="Hishigaki H."/>
            <person name="Watanabe T."/>
            <person name="Sugiyama A."/>
            <person name="Takemoto M."/>
            <person name="Kawakami B."/>
            <person name="Yamazaki M."/>
            <person name="Watanabe K."/>
            <person name="Kumagai A."/>
            <person name="Itakura S."/>
            <person name="Fukuzumi Y."/>
            <person name="Fujimori Y."/>
            <person name="Komiyama M."/>
            <person name="Tashiro H."/>
            <person name="Tanigami A."/>
            <person name="Fujiwara T."/>
            <person name="Ono T."/>
            <person name="Yamada K."/>
            <person name="Fujii Y."/>
            <person name="Ozaki K."/>
            <person name="Hirao M."/>
            <person name="Ohmori Y."/>
            <person name="Kawabata A."/>
            <person name="Hikiji T."/>
            <person name="Kobatake N."/>
            <person name="Inagaki H."/>
            <person name="Ikema Y."/>
            <person name="Okamoto S."/>
            <person name="Okitani R."/>
            <person name="Kawakami T."/>
            <person name="Noguchi S."/>
            <person name="Itoh T."/>
            <person name="Shigeta K."/>
            <person name="Senba T."/>
            <person name="Matsumura K."/>
            <person name="Nakajima Y."/>
            <person name="Mizuno T."/>
            <person name="Morinaga M."/>
            <person name="Sasaki M."/>
            <person name="Togashi T."/>
            <person name="Oyama M."/>
            <person name="Hata H."/>
            <person name="Watanabe M."/>
            <person name="Komatsu T."/>
            <person name="Mizushima-Sugano J."/>
            <person name="Satoh T."/>
            <person name="Shirai Y."/>
            <person name="Takahashi Y."/>
            <person name="Nakagawa K."/>
            <person name="Okumura K."/>
            <person name="Nagase T."/>
            <person name="Nomura N."/>
            <person name="Kikuchi H."/>
            <person name="Masuho Y."/>
            <person name="Yamashita R."/>
            <person name="Nakai K."/>
            <person name="Yada T."/>
            <person name="Nakamura Y."/>
            <person name="Ohara O."/>
            <person name="Isogai T."/>
            <person name="Sugano S."/>
        </authorList>
    </citation>
    <scope>NUCLEOTIDE SEQUENCE [LARGE SCALE MRNA]</scope>
</reference>
<reference key="3">
    <citation type="journal article" date="2001" name="Nature">
        <title>The DNA sequence and comparative analysis of human chromosome 20.</title>
        <authorList>
            <person name="Deloukas P."/>
            <person name="Matthews L.H."/>
            <person name="Ashurst J.L."/>
            <person name="Burton J."/>
            <person name="Gilbert J.G.R."/>
            <person name="Jones M."/>
            <person name="Stavrides G."/>
            <person name="Almeida J.P."/>
            <person name="Babbage A.K."/>
            <person name="Bagguley C.L."/>
            <person name="Bailey J."/>
            <person name="Barlow K.F."/>
            <person name="Bates K.N."/>
            <person name="Beard L.M."/>
            <person name="Beare D.M."/>
            <person name="Beasley O.P."/>
            <person name="Bird C.P."/>
            <person name="Blakey S.E."/>
            <person name="Bridgeman A.M."/>
            <person name="Brown A.J."/>
            <person name="Buck D."/>
            <person name="Burrill W.D."/>
            <person name="Butler A.P."/>
            <person name="Carder C."/>
            <person name="Carter N.P."/>
            <person name="Chapman J.C."/>
            <person name="Clamp M."/>
            <person name="Clark G."/>
            <person name="Clark L.N."/>
            <person name="Clark S.Y."/>
            <person name="Clee C.M."/>
            <person name="Clegg S."/>
            <person name="Cobley V.E."/>
            <person name="Collier R.E."/>
            <person name="Connor R.E."/>
            <person name="Corby N.R."/>
            <person name="Coulson A."/>
            <person name="Coville G.J."/>
            <person name="Deadman R."/>
            <person name="Dhami P.D."/>
            <person name="Dunn M."/>
            <person name="Ellington A.G."/>
            <person name="Frankland J.A."/>
            <person name="Fraser A."/>
            <person name="French L."/>
            <person name="Garner P."/>
            <person name="Grafham D.V."/>
            <person name="Griffiths C."/>
            <person name="Griffiths M.N.D."/>
            <person name="Gwilliam R."/>
            <person name="Hall R.E."/>
            <person name="Hammond S."/>
            <person name="Harley J.L."/>
            <person name="Heath P.D."/>
            <person name="Ho S."/>
            <person name="Holden J.L."/>
            <person name="Howden P.J."/>
            <person name="Huckle E."/>
            <person name="Hunt A.R."/>
            <person name="Hunt S.E."/>
            <person name="Jekosch K."/>
            <person name="Johnson C.M."/>
            <person name="Johnson D."/>
            <person name="Kay M.P."/>
            <person name="Kimberley A.M."/>
            <person name="King A."/>
            <person name="Knights A."/>
            <person name="Laird G.K."/>
            <person name="Lawlor S."/>
            <person name="Lehvaeslaiho M.H."/>
            <person name="Leversha M.A."/>
            <person name="Lloyd C."/>
            <person name="Lloyd D.M."/>
            <person name="Lovell J.D."/>
            <person name="Marsh V.L."/>
            <person name="Martin S.L."/>
            <person name="McConnachie L.J."/>
            <person name="McLay K."/>
            <person name="McMurray A.A."/>
            <person name="Milne S.A."/>
            <person name="Mistry D."/>
            <person name="Moore M.J.F."/>
            <person name="Mullikin J.C."/>
            <person name="Nickerson T."/>
            <person name="Oliver K."/>
            <person name="Parker A."/>
            <person name="Patel R."/>
            <person name="Pearce T.A.V."/>
            <person name="Peck A.I."/>
            <person name="Phillimore B.J.C.T."/>
            <person name="Prathalingam S.R."/>
            <person name="Plumb R.W."/>
            <person name="Ramsay H."/>
            <person name="Rice C.M."/>
            <person name="Ross M.T."/>
            <person name="Scott C.E."/>
            <person name="Sehra H.K."/>
            <person name="Shownkeen R."/>
            <person name="Sims S."/>
            <person name="Skuce C.D."/>
            <person name="Smith M.L."/>
            <person name="Soderlund C."/>
            <person name="Steward C.A."/>
            <person name="Sulston J.E."/>
            <person name="Swann R.M."/>
            <person name="Sycamore N."/>
            <person name="Taylor R."/>
            <person name="Tee L."/>
            <person name="Thomas D.W."/>
            <person name="Thorpe A."/>
            <person name="Tracey A."/>
            <person name="Tromans A.C."/>
            <person name="Vaudin M."/>
            <person name="Wall M."/>
            <person name="Wallis J.M."/>
            <person name="Whitehead S.L."/>
            <person name="Whittaker P."/>
            <person name="Willey D.L."/>
            <person name="Williams L."/>
            <person name="Williams S.A."/>
            <person name="Wilming L."/>
            <person name="Wray P.W."/>
            <person name="Hubbard T."/>
            <person name="Durbin R.M."/>
            <person name="Bentley D.R."/>
            <person name="Beck S."/>
            <person name="Rogers J."/>
        </authorList>
    </citation>
    <scope>NUCLEOTIDE SEQUENCE [LARGE SCALE GENOMIC DNA]</scope>
</reference>
<reference key="4">
    <citation type="submission" date="2005-09" db="EMBL/GenBank/DDBJ databases">
        <authorList>
            <person name="Mural R.J."/>
            <person name="Istrail S."/>
            <person name="Sutton G.G."/>
            <person name="Florea L."/>
            <person name="Halpern A.L."/>
            <person name="Mobarry C.M."/>
            <person name="Lippert R."/>
            <person name="Walenz B."/>
            <person name="Shatkay H."/>
            <person name="Dew I."/>
            <person name="Miller J.R."/>
            <person name="Flanigan M.J."/>
            <person name="Edwards N.J."/>
            <person name="Bolanos R."/>
            <person name="Fasulo D."/>
            <person name="Halldorsson B.V."/>
            <person name="Hannenhalli S."/>
            <person name="Turner R."/>
            <person name="Yooseph S."/>
            <person name="Lu F."/>
            <person name="Nusskern D.R."/>
            <person name="Shue B.C."/>
            <person name="Zheng X.H."/>
            <person name="Zhong F."/>
            <person name="Delcher A.L."/>
            <person name="Huson D.H."/>
            <person name="Kravitz S.A."/>
            <person name="Mouchard L."/>
            <person name="Reinert K."/>
            <person name="Remington K.A."/>
            <person name="Clark A.G."/>
            <person name="Waterman M.S."/>
            <person name="Eichler E.E."/>
            <person name="Adams M.D."/>
            <person name="Hunkapiller M.W."/>
            <person name="Myers E.W."/>
            <person name="Venter J.C."/>
        </authorList>
    </citation>
    <scope>NUCLEOTIDE SEQUENCE [LARGE SCALE GENOMIC DNA]</scope>
</reference>
<reference key="5">
    <citation type="journal article" date="2004" name="Genome Res.">
        <title>The status, quality, and expansion of the NIH full-length cDNA project: the Mammalian Gene Collection (MGC).</title>
        <authorList>
            <consortium name="The MGC Project Team"/>
        </authorList>
    </citation>
    <scope>NUCLEOTIDE SEQUENCE [LARGE SCALE MRNA]</scope>
    <source>
        <tissue>Brain</tissue>
    </source>
</reference>
<reference key="6">
    <citation type="journal article" date="1999" name="Mol. Cell. Biol.">
        <title>The TFIIIC90 subunit of TFIIIC interacts with multiple components of the RNA polymerase III machinery and contains a histone-specific acetyltransferase activity.</title>
        <authorList>
            <person name="Hsieh Y.-J."/>
            <person name="Kundu T.K."/>
            <person name="Wang Z."/>
            <person name="Kovelman R."/>
            <person name="Roeder R.G."/>
        </authorList>
    </citation>
    <scope>INTERACTION WITH GTF3C4</scope>
</reference>
<reference key="7">
    <citation type="journal article" date="2001" name="Proc. Natl. Acad. Sci. U.S.A.">
        <title>Nuclear particles containing RNA polymerase III complexes associated with the junctional plaque protein plakophilin 2.</title>
        <authorList>
            <person name="Mertens C."/>
            <person name="Hofmann I."/>
            <person name="Wang Z."/>
            <person name="Teichmann M."/>
            <person name="Sepehri Chong S."/>
            <person name="Schnoelzer M."/>
            <person name="Franke W.W."/>
        </authorList>
    </citation>
    <scope>INTERACTION WITH PKP2</scope>
</reference>
<reference key="8">
    <citation type="journal article" date="2002" name="Mol. Cell. Biol.">
        <title>Characterization of human RNA polymerase III identifies orthologues for Saccharomyces cerevisiae RNA polymerase III subunits.</title>
        <authorList>
            <person name="Hu P."/>
            <person name="Wu S."/>
            <person name="Sun Y."/>
            <person name="Yuan C.-C."/>
            <person name="Kobayashi R."/>
            <person name="Myers M.P."/>
            <person name="Hernandez N."/>
        </authorList>
    </citation>
    <scope>IDENTIFICATION IN THE RNA POL III COMPLEX</scope>
    <scope>IDENTIFICATION BY MASS SPECTROMETRY</scope>
</reference>
<reference key="9">
    <citation type="journal article" date="2008" name="J. Mol. Biol.">
        <title>Regulation of RNA polymerase III transcription by Maf1 in mammalian cells.</title>
        <authorList>
            <person name="Goodfellow S.J."/>
            <person name="Graham E.L."/>
            <person name="Kantidakis T."/>
            <person name="Marshall L."/>
            <person name="Coppins B.A."/>
            <person name="Oficjalska-Pham D."/>
            <person name="Gerard M."/>
            <person name="Lefebvre O."/>
            <person name="White R.J."/>
        </authorList>
    </citation>
    <scope>INTERACTION WITH MAF1</scope>
</reference>
<reference key="10">
    <citation type="journal article" date="2010" name="Genome Res.">
        <title>Defining the RNA polymerase III transcriptome: Genome-wide localization of the RNA polymerase III transcription machinery in human cells.</title>
        <authorList>
            <person name="Canella D."/>
            <person name="Praz V."/>
            <person name="Reina J.H."/>
            <person name="Cousin P."/>
            <person name="Hernandez N."/>
        </authorList>
    </citation>
    <scope>FUNCTION OF POL III</scope>
</reference>
<reference key="11">
    <citation type="journal article" date="2011" name="BMC Syst. Biol.">
        <title>Initial characterization of the human central proteome.</title>
        <authorList>
            <person name="Burkard T.R."/>
            <person name="Planyavsky M."/>
            <person name="Kaupe I."/>
            <person name="Breitwieser F.P."/>
            <person name="Buerckstuemmer T."/>
            <person name="Bennett K.L."/>
            <person name="Superti-Furga G."/>
            <person name="Colinge J."/>
        </authorList>
    </citation>
    <scope>IDENTIFICATION BY MASS SPECTROMETRY [LARGE SCALE ANALYSIS]</scope>
</reference>
<reference key="12">
    <citation type="journal article" date="2011" name="Nat. Struct. Mol. Biol.">
        <title>Structure-function analysis of hRPC62 provides insights into RNA polymerase III transcription initiation.</title>
        <authorList>
            <person name="Lefevre S."/>
            <person name="Dumay-Odelot H."/>
            <person name="El-Ayoubi L."/>
            <person name="Budd A."/>
            <person name="Legrand P."/>
            <person name="Pinaud N."/>
            <person name="Teichmann M."/>
            <person name="Fribourg S."/>
        </authorList>
    </citation>
    <scope>FUNCTION</scope>
    <scope>INTERACTION WITH POLR3C</scope>
    <scope>MUTAGENESIS OF 137-LYS--LYS-140 AND 173-GLU--GLU-175</scope>
</reference>
<reference key="13">
    <citation type="journal article" date="2012" name="Proc. Natl. Acad. Sci. U.S.A.">
        <title>N-terminal acetylome analyses and functional insights of the N-terminal acetyltransferase NatB.</title>
        <authorList>
            <person name="Van Damme P."/>
            <person name="Lasa M."/>
            <person name="Polevoda B."/>
            <person name="Gazquez C."/>
            <person name="Elosegui-Artola A."/>
            <person name="Kim D.S."/>
            <person name="De Juan-Pardo E."/>
            <person name="Demeyer K."/>
            <person name="Hole K."/>
            <person name="Larrea E."/>
            <person name="Timmerman E."/>
            <person name="Prieto J."/>
            <person name="Arnesen T."/>
            <person name="Sherman F."/>
            <person name="Gevaert K."/>
            <person name="Aldabe R."/>
        </authorList>
    </citation>
    <scope>ACETYLATION [LARGE SCALE ANALYSIS] AT ALA-2</scope>
    <scope>CLEAVAGE OF INITIATOR METHIONINE [LARGE SCALE ANALYSIS]</scope>
    <scope>IDENTIFICATION BY MASS SPECTROMETRY [LARGE SCALE ANALYSIS]</scope>
</reference>
<reference key="14">
    <citation type="journal article" date="2014" name="Nat. Struct. Mol. Biol.">
        <title>Uncovering global SUMOylation signaling networks in a site-specific manner.</title>
        <authorList>
            <person name="Hendriks I.A."/>
            <person name="D'Souza R.C."/>
            <person name="Yang B."/>
            <person name="Verlaan-de Vries M."/>
            <person name="Mann M."/>
            <person name="Vertegaal A.C."/>
        </authorList>
    </citation>
    <scope>SUMOYLATION [LARGE SCALE ANALYSIS] AT LYS-7</scope>
    <scope>IDENTIFICATION BY MASS SPECTROMETRY [LARGE SCALE ANALYSIS]</scope>
</reference>
<reference key="15">
    <citation type="journal article" date="2015" name="Cell Rep.">
        <title>SUMO-2 orchestrates chromatin modifiers in response to DNA damage.</title>
        <authorList>
            <person name="Hendriks I.A."/>
            <person name="Treffers L.W."/>
            <person name="Verlaan-de Vries M."/>
            <person name="Olsen J.V."/>
            <person name="Vertegaal A.C."/>
        </authorList>
    </citation>
    <scope>SUMOYLATION [LARGE SCALE ANALYSIS] AT LYS-7</scope>
    <scope>IDENTIFICATION BY MASS SPECTROMETRY [LARGE SCALE ANALYSIS]</scope>
</reference>
<reference key="16">
    <citation type="journal article" date="2017" name="Nat. Struct. Mol. Biol.">
        <title>Site-specific mapping of the human SUMO proteome reveals co-modification with phosphorylation.</title>
        <authorList>
            <person name="Hendriks I.A."/>
            <person name="Lyon D."/>
            <person name="Young C."/>
            <person name="Jensen L.J."/>
            <person name="Vertegaal A.C."/>
            <person name="Nielsen M.L."/>
        </authorList>
    </citation>
    <scope>SUMOYLATION [LARGE SCALE ANALYSIS] AT LYS-5 AND LYS-7</scope>
    <scope>IDENTIFICATION BY MASS SPECTROMETRY [LARGE SCALE ANALYSIS]</scope>
</reference>
<reference key="17">
    <citation type="journal article" date="2009" name="Cell">
        <title>RNA polymerase III detects cytosolic DNA and induces type I interferons through the RIG-I pathway.</title>
        <authorList>
            <person name="Chiu Y.-H."/>
            <person name="Macmillan J.B."/>
            <person name="Chen Z.J."/>
        </authorList>
    </citation>
    <scope>FUNCTION</scope>
</reference>
<reference key="18">
    <citation type="journal article" date="2009" name="Nat. Immunol.">
        <title>RIG-I-dependent sensing of poly(dA:dT) through the induction of an RNA polymerase III-transcribed RNA intermediate.</title>
        <authorList>
            <person name="Ablasser A."/>
            <person name="Bauernfeind F."/>
            <person name="Hartmann G."/>
            <person name="Latz E."/>
            <person name="Fitzgerald K.A."/>
            <person name="Hornung V."/>
        </authorList>
    </citation>
    <scope>FUNCTION</scope>
</reference>
<reference key="19">
    <citation type="journal article" date="2020" name="Nat. Commun.">
        <title>Structure of human RNA polymerase III.</title>
        <authorList>
            <person name="Ramsay E.P."/>
            <person name="Abascal-Palacios G."/>
            <person name="Daiss J.L."/>
            <person name="King H."/>
            <person name="Gouge J."/>
            <person name="Pilsl M."/>
            <person name="Beuron F."/>
            <person name="Morris E."/>
            <person name="Gunkel P."/>
            <person name="Engel C."/>
            <person name="Vannini A."/>
        </authorList>
    </citation>
    <scope>STRUCTURE BY ELECTRON MICROSCOPY (4.00 ANGSTROMS)</scope>
    <scope>SUBUNIT</scope>
    <scope>SUBCELLULAR LOCATION</scope>
</reference>
<reference key="20">
    <citation type="journal article" date="2021" name="Cell Res.">
        <title>Structure of human RNA polymerase III elongation complex.</title>
        <authorList>
            <person name="Li L."/>
            <person name="Yu Z."/>
            <person name="Zhao D."/>
            <person name="Ren Y."/>
            <person name="Hou H."/>
            <person name="Xu Y."/>
        </authorList>
    </citation>
    <scope>STRUCTURE BY ELECTRON MICROSCOPY (3.35 ANGSTROMS) IN COMPLEX WITH [4FE-4S] CLUSTER</scope>
    <scope>SUBUNIT</scope>
</reference>
<reference key="21">
    <citation type="journal article" date="2021" name="Nat. Commun.">
        <title>Structural insights into RNA polymerase III-mediated transcription termination through trapping poly-deoxythymidine.</title>
        <authorList>
            <person name="Hou H."/>
            <person name="Li Y."/>
            <person name="Wang M."/>
            <person name="Liu A."/>
            <person name="Yu Z."/>
            <person name="Chen K."/>
            <person name="Zhao D."/>
            <person name="Xu Y."/>
        </authorList>
    </citation>
    <scope>STRUCTURE BY ELECTRON MICROSCOPY (3.60 ANGSTROMS)</scope>
    <scope>FUNCTION</scope>
    <scope>SUBUNIT</scope>
</reference>
<reference key="22">
    <citation type="journal article" date="2021" name="Nat. Struct. Mol. Biol.">
        <title>Cryo-EM structures of human RNA polymerase III in its unbound and transcribing states.</title>
        <authorList>
            <person name="Girbig M."/>
            <person name="Misiaszek A.D."/>
            <person name="Vorlander M.K."/>
            <person name="Lafita A."/>
            <person name="Grotsch H."/>
            <person name="Baudin F."/>
            <person name="Bateman A."/>
            <person name="Muller C.W."/>
        </authorList>
    </citation>
    <scope>STRUCTURE BY ELECTRON MICROSCOPY (2.80 ANGSTROMS) IN COMPLEX WITH [4FE-4S] CLUSTER</scope>
    <scope>FUNCTION</scope>
    <scope>SUBUNIT</scope>
    <scope>DOMAIN</scope>
</reference>
<reference key="23">
    <citation type="journal article" date="2021" name="Nat. Struct. Mol. Biol.">
        <title>Structural insights into transcriptional regulation of human RNA polymerase III.</title>
        <authorList>
            <person name="Wang Q."/>
            <person name="Li S."/>
            <person name="Wan F."/>
            <person name="Xu Y."/>
            <person name="Wu Z."/>
            <person name="Cao M."/>
            <person name="Lan P."/>
            <person name="Lei M."/>
            <person name="Wu J."/>
        </authorList>
    </citation>
    <scope>STRUCTURE BY ELECTRON MICROSCOPY (2.90 ANGSTROMS) IN COMPLEX WITH [4FE-4S] CLUSTER</scope>
    <scope>SUBUNIT</scope>
</reference>
<reference key="24">
    <citation type="journal article" date="2018" name="Neurol. Neuroimmunol. Neuroinflamm.">
        <title>Varicella-zoster virus CNS vasculitis and RNA polymerase III gene mutation in identical twins.</title>
        <authorList>
            <person name="Carter-Timofte M.E."/>
            <person name="Hansen A.F."/>
            <person name="Mardahl M."/>
            <person name="Fribourg S."/>
            <person name="Rapaport F."/>
            <person name="Zhang S.Y."/>
            <person name="Casanova J.L."/>
            <person name="Paludan S.R."/>
            <person name="Christiansen M."/>
            <person name="Larsen C.S."/>
            <person name="Mogensen T.H."/>
        </authorList>
    </citation>
    <scope>VARIANT IMD101 TRP-50</scope>
    <scope>INVOLVEMENT IN IMD101</scope>
    <scope>FUNCTION</scope>
</reference>
<comment type="function">
    <text evidence="6 7 8 9 10 12 13 15">DNA-dependent RNA polymerase catalyzes the transcription of DNA into RNA using the four ribonucleoside triphosphates as substrates (PubMed:20413673, PubMed:21358628, PubMed:33558764, PubMed:34675218). Specific peripheric component of RNA polymerase III (Pol III) which synthesizes small non-coding RNAs including 5S rRNA, snRNAs, tRNAs and miRNAs from at least 500 distinct genomic loci. Part of POLR3C/RPC3-POLR3F/RPC6-POLR3G/RPC7 heterotrimer that coordinates the dynamics of Pol III stalk and clamp modules during the transition from apo to elongation state (PubMed:20413673, PubMed:33558764, PubMed:33558766). Pol III plays a key role in sensing and limiting infection by intracellular bacteria and DNA viruses, including varicella zoster virus. Acts as a nuclear and cytosolic DNA sensor detecting AT-rich DNA, involved in innate immune response. Can sense non-self dsDNA that serves as template for transcription into dsRNA. The non-self RNA polymerase III transcripts, such as Epstein-Barr virus-encoded RNAs (EBERs) induce type I interferon and NF-kappa-B through the RIG-I pathway (PubMed:19609254, PubMed:19631370, PubMed:30211253). Preferentially binds double-stranded DNA (dsDNA) (PubMed:21358628).</text>
</comment>
<comment type="subunit">
    <text evidence="1 2 3 4 5 9 11 12 13 14 15">Component of the RNA polymerase III complex consisting of 17 subunits: a ten-subunit horseshoe-shaped catalytic core composed of POLR3A/RPC1, POLR3B/RPC2, POLR1C/RPAC1, POLR1D/RPAC2, POLR3K/RPC10, POLR2E/RPABC1, POLR2F/RPABC2, POLR2H/RPABC3, POLR2K/RPABC4 and POLR2L/RPABC5; a mobile stalk composed of two subunits POLR3H/RPC8 and CRCP/RPC9, protruding from the core and functioning primarily in transcription initiation; and additional subunits homologous to general transcription factors of the RNA polymerase II machinery, POLR3C/RPC3-POLR3F/RPC6-POLR3G/RPC7 heterotrimer required for transcription initiation and POLR3D/RPC4-POLR3E/RPC5 heterodimer involved in both transcription initiation and termination (PubMed:12391170, PubMed:33335104, PubMed:33558764, PubMed:33558766, PubMed:33674783, PubMed:34675218). Directly interacts with POLR3C (PubMed:21358628). Interacts with TBP and TFIIIB90 and GTF3C4 (By similarity) (PubMed:10523658). Interacts with MAF1 (PubMed:18377933). As part of the RNA polymerase III complex, interacts with PKP2 (PubMed:11416169).</text>
</comment>
<comment type="interaction">
    <interactant intactId="EBI-710067">
        <id>Q9H1D9</id>
    </interactant>
    <interactant intactId="EBI-21535880">
        <id>Q92870-2</id>
        <label>APBB2</label>
    </interactant>
    <organismsDiffer>false</organismsDiffer>
    <experiments>3</experiments>
</comment>
<comment type="interaction">
    <interactant intactId="EBI-710067">
        <id>Q9H1D9</id>
    </interactant>
    <interactant intactId="EBI-1166928">
        <id>Q8N5M1</id>
        <label>ATPAF2</label>
    </interactant>
    <organismsDiffer>false</organismsDiffer>
    <experiments>3</experiments>
</comment>
<comment type="interaction">
    <interactant intactId="EBI-710067">
        <id>Q9H1D9</id>
    </interactant>
    <interactant intactId="EBI-1054228">
        <id>P41091</id>
        <label>EIF2S3</label>
    </interactant>
    <organismsDiffer>false</organismsDiffer>
    <experiments>3</experiments>
</comment>
<comment type="interaction">
    <interactant intactId="EBI-710067">
        <id>Q9H1D9</id>
    </interactant>
    <interactant intactId="EBI-10226858">
        <id>Q0VDC6</id>
        <label>FKBP1A</label>
    </interactant>
    <organismsDiffer>false</organismsDiffer>
    <experiments>3</experiments>
</comment>
<comment type="interaction">
    <interactant intactId="EBI-710067">
        <id>Q9H1D9</id>
    </interactant>
    <interactant intactId="EBI-747754">
        <id>P28799</id>
        <label>GRN</label>
    </interactant>
    <organismsDiffer>false</organismsDiffer>
    <experiments>3</experiments>
</comment>
<comment type="interaction">
    <interactant intactId="EBI-710067">
        <id>Q9H1D9</id>
    </interactant>
    <interactant intactId="EBI-356991">
        <id>P54652</id>
        <label>HSPA2</label>
    </interactant>
    <organismsDiffer>false</organismsDiffer>
    <experiments>3</experiments>
</comment>
<comment type="interaction">
    <interactant intactId="EBI-710067">
        <id>Q9H1D9</id>
    </interactant>
    <interactant intactId="EBI-352682">
        <id>P04792</id>
        <label>HSPB1</label>
    </interactant>
    <organismsDiffer>false</organismsDiffer>
    <experiments>3</experiments>
</comment>
<comment type="interaction">
    <interactant intactId="EBI-710067">
        <id>Q9H1D9</id>
    </interactant>
    <interactant intactId="EBI-10975473">
        <id>O60333-2</id>
        <label>KIF1B</label>
    </interactant>
    <organismsDiffer>false</organismsDiffer>
    <experiments>3</experiments>
</comment>
<comment type="interaction">
    <interactant intactId="EBI-710067">
        <id>Q9H1D9</id>
    </interactant>
    <interactant intactId="EBI-50433196">
        <id>A0A6Q8PF08</id>
        <label>PMP22</label>
    </interactant>
    <organismsDiffer>false</organismsDiffer>
    <experiments>3</experiments>
</comment>
<comment type="interaction">
    <interactant intactId="EBI-710067">
        <id>Q9H1D9</id>
    </interactant>
    <interactant intactId="EBI-2827376">
        <id>Q12796</id>
        <label>PNRC1</label>
    </interactant>
    <organismsDiffer>false</organismsDiffer>
    <experiments>3</experiments>
</comment>
<comment type="interaction">
    <interactant intactId="EBI-710067">
        <id>Q9H1D9</id>
    </interactant>
    <interactant intactId="EBI-5452779">
        <id>Q9BUI4</id>
        <label>POLR3C</label>
    </interactant>
    <organismsDiffer>false</organismsDiffer>
    <experiments>4</experiments>
</comment>
<comment type="interaction">
    <interactant intactId="EBI-710067">
        <id>Q9H1D9</id>
    </interactant>
    <interactant intactId="EBI-12362221">
        <id>O15318</id>
        <label>POLR3G</label>
    </interactant>
    <organismsDiffer>false</organismsDiffer>
    <experiments>5</experiments>
</comment>
<comment type="interaction">
    <interactant intactId="EBI-710067">
        <id>Q9H1D9</id>
    </interactant>
    <interactant intactId="EBI-2855862">
        <id>Q9BT43</id>
        <label>POLR3GL</label>
    </interactant>
    <organismsDiffer>false</organismsDiffer>
    <experiments>8</experiments>
</comment>
<comment type="interaction">
    <interactant intactId="EBI-710067">
        <id>Q9H1D9</id>
    </interactant>
    <interactant intactId="EBI-395940">
        <id>Q13523</id>
        <label>PRP4K</label>
    </interactant>
    <organismsDiffer>false</organismsDiffer>
    <experiments>2</experiments>
</comment>
<comment type="interaction">
    <interactant intactId="EBI-710067">
        <id>Q9H1D9</id>
    </interactant>
    <interactant intactId="EBI-749195">
        <id>P60891</id>
        <label>PRPS1</label>
    </interactant>
    <organismsDiffer>false</organismsDiffer>
    <experiments>3</experiments>
</comment>
<comment type="interaction">
    <interactant intactId="EBI-710067">
        <id>Q9H1D9</id>
    </interactant>
    <interactant intactId="EBI-720609">
        <id>O76024</id>
        <label>WFS1</label>
    </interactant>
    <organismsDiffer>false</organismsDiffer>
    <experiments>3</experiments>
</comment>
<comment type="subcellular location">
    <subcellularLocation>
        <location evidence="11">Nucleus</location>
    </subcellularLocation>
</comment>
<comment type="domain">
    <text evidence="12">The [4FE-4S] cluster-binding domain adopts a globular structure that serves as an interaction hub that connects the POLR3C/RPC3-POLR3F/RPC6-POLR3G/RPC7 heterotrimer to the Pol III core.</text>
</comment>
<comment type="disease" evidence="10">
    <disease id="DI-06422">
        <name>Immunodeficiency 101, varicella zoster virus-specific</name>
        <acronym>IMD101</acronym>
        <description>An autosomal dominant immunologic disorder characterized by reactivation of varicella zoster virus (VZV) infection in adulthood after primary childhood infection with VZV. The viral reactivation manifests as central nervous system vasculitis with stroke-like episodes and lacunar infarcts on brain imaging. Features include headache, hemiparesis, impaired balance, and other neurologic signs.</description>
        <dbReference type="MIM" id="619872"/>
    </disease>
    <text>The disease may be caused by variants affecting the gene represented in this entry.</text>
</comment>
<comment type="similarity">
    <text evidence="16">Belongs to the eukaryotic RPC34/RPC39 RNA polymerase subunit family.</text>
</comment>
<sequence length="316" mass="35684">MAEVKVKVQPPDADPVEIENRIIELCHQFPHGITDQVIQNEMPHIEAQQRAVAINRLLSMGQLDLLRSNTGLLYRIKDSQNAGKMKGSDNQEKLVYQIIEDAGNKGIWSRDIRYKSNLPLTEINKILKNLESKKLIKAVKSVAASKKKVYMLYNLQPDRSVTGGAWYSDQDFESEFVEVLNQQCFKFLQSKAETARESKQNPMIQRNSSFASSHEVWKYICELGISKVELSMEDIETILNTLIYDGKVEMTIIAAKEGTVGSVDGHMKLYRAVNPIIPPTGLVRAPCGLCPVFDDCHEGGEISPSNCIYMTEWLEF</sequence>
<evidence type="ECO:0000250" key="1"/>
<evidence type="ECO:0000269" key="2">
    <source>
    </source>
</evidence>
<evidence type="ECO:0000269" key="3">
    <source>
    </source>
</evidence>
<evidence type="ECO:0000269" key="4">
    <source>
    </source>
</evidence>
<evidence type="ECO:0000269" key="5">
    <source>
    </source>
</evidence>
<evidence type="ECO:0000269" key="6">
    <source>
    </source>
</evidence>
<evidence type="ECO:0000269" key="7">
    <source>
    </source>
</evidence>
<evidence type="ECO:0000269" key="8">
    <source>
    </source>
</evidence>
<evidence type="ECO:0000269" key="9">
    <source>
    </source>
</evidence>
<evidence type="ECO:0000269" key="10">
    <source>
    </source>
</evidence>
<evidence type="ECO:0000269" key="11">
    <source>
    </source>
</evidence>
<evidence type="ECO:0000269" key="12">
    <source>
    </source>
</evidence>
<evidence type="ECO:0000269" key="13">
    <source>
    </source>
</evidence>
<evidence type="ECO:0000269" key="14">
    <source>
    </source>
</evidence>
<evidence type="ECO:0000269" key="15">
    <source>
    </source>
</evidence>
<evidence type="ECO:0000305" key="16"/>
<evidence type="ECO:0000312" key="17">
    <source>
        <dbReference type="HGNC" id="HGNC:15763"/>
    </source>
</evidence>
<evidence type="ECO:0007744" key="18">
    <source>
        <dbReference type="PDB" id="7D58"/>
    </source>
</evidence>
<evidence type="ECO:0007744" key="19">
    <source>
        <dbReference type="PDB" id="7DN3"/>
    </source>
</evidence>
<evidence type="ECO:0007744" key="20">
    <source>
    </source>
</evidence>
<evidence type="ECO:0007744" key="21">
    <source>
    </source>
</evidence>
<evidence type="ECO:0007744" key="22">
    <source>
    </source>
</evidence>
<evidence type="ECO:0007744" key="23">
    <source>
    </source>
</evidence>
<evidence type="ECO:0007829" key="24">
    <source>
        <dbReference type="PDB" id="2YU3"/>
    </source>
</evidence>
<evidence type="ECO:0007829" key="25">
    <source>
        <dbReference type="PDB" id="7AE1"/>
    </source>
</evidence>
<evidence type="ECO:0007829" key="26">
    <source>
        <dbReference type="PDB" id="8IUH"/>
    </source>
</evidence>
<dbReference type="EMBL" id="U93869">
    <property type="protein sequence ID" value="AAB63677.1"/>
    <property type="molecule type" value="mRNA"/>
</dbReference>
<dbReference type="EMBL" id="AK290892">
    <property type="protein sequence ID" value="BAF83581.1"/>
    <property type="molecule type" value="mRNA"/>
</dbReference>
<dbReference type="EMBL" id="AL121893">
    <property type="status" value="NOT_ANNOTATED_CDS"/>
    <property type="molecule type" value="Genomic_DNA"/>
</dbReference>
<dbReference type="EMBL" id="CH471133">
    <property type="protein sequence ID" value="EAX10240.1"/>
    <property type="molecule type" value="Genomic_DNA"/>
</dbReference>
<dbReference type="EMBL" id="BC012588">
    <property type="protein sequence ID" value="AAH12588.1"/>
    <property type="molecule type" value="mRNA"/>
</dbReference>
<dbReference type="CCDS" id="CCDS13135.1"/>
<dbReference type="RefSeq" id="NP_001269455.1">
    <property type="nucleotide sequence ID" value="NM_001282526.1"/>
</dbReference>
<dbReference type="RefSeq" id="NP_006457.2">
    <property type="nucleotide sequence ID" value="NM_006466.3"/>
</dbReference>
<dbReference type="PDB" id="2DK5">
    <property type="method" value="NMR"/>
    <property type="chains" value="A=78-155"/>
</dbReference>
<dbReference type="PDB" id="2YU3">
    <property type="method" value="NMR"/>
    <property type="chains" value="A=61-142"/>
</dbReference>
<dbReference type="PDB" id="7A6H">
    <property type="method" value="EM"/>
    <property type="resolution" value="3.30 A"/>
    <property type="chains" value="P=1-316"/>
</dbReference>
<dbReference type="PDB" id="7AE1">
    <property type="method" value="EM"/>
    <property type="resolution" value="2.80 A"/>
    <property type="chains" value="P=1-316"/>
</dbReference>
<dbReference type="PDB" id="7AE3">
    <property type="method" value="EM"/>
    <property type="resolution" value="3.10 A"/>
    <property type="chains" value="P=1-316"/>
</dbReference>
<dbReference type="PDB" id="7AEA">
    <property type="method" value="EM"/>
    <property type="resolution" value="3.40 A"/>
    <property type="chains" value="P=1-316"/>
</dbReference>
<dbReference type="PDB" id="7AST">
    <property type="method" value="EM"/>
    <property type="resolution" value="4.00 A"/>
    <property type="chains" value="Z=1-316"/>
</dbReference>
<dbReference type="PDB" id="7D58">
    <property type="method" value="EM"/>
    <property type="resolution" value="2.90 A"/>
    <property type="chains" value="P=1-316"/>
</dbReference>
<dbReference type="PDB" id="7D59">
    <property type="method" value="EM"/>
    <property type="resolution" value="3.10 A"/>
    <property type="chains" value="P=1-316"/>
</dbReference>
<dbReference type="PDB" id="7DN3">
    <property type="method" value="EM"/>
    <property type="resolution" value="3.50 A"/>
    <property type="chains" value="P=1-316"/>
</dbReference>
<dbReference type="PDB" id="7DU2">
    <property type="method" value="EM"/>
    <property type="resolution" value="3.35 A"/>
    <property type="chains" value="P=1-316"/>
</dbReference>
<dbReference type="PDB" id="7FJI">
    <property type="method" value="EM"/>
    <property type="resolution" value="3.60 A"/>
    <property type="chains" value="P=1-316"/>
</dbReference>
<dbReference type="PDB" id="7FJJ">
    <property type="method" value="EM"/>
    <property type="resolution" value="3.60 A"/>
    <property type="chains" value="P=1-316"/>
</dbReference>
<dbReference type="PDB" id="8ITY">
    <property type="method" value="EM"/>
    <property type="resolution" value="3.90 A"/>
    <property type="chains" value="P=1-316"/>
</dbReference>
<dbReference type="PDB" id="8IUE">
    <property type="method" value="EM"/>
    <property type="resolution" value="4.10 A"/>
    <property type="chains" value="P=1-316"/>
</dbReference>
<dbReference type="PDB" id="8IUH">
    <property type="method" value="EM"/>
    <property type="resolution" value="3.40 A"/>
    <property type="chains" value="P=1-316"/>
</dbReference>
<dbReference type="PDB" id="9FSO">
    <property type="method" value="EM"/>
    <property type="resolution" value="3.28 A"/>
    <property type="chains" value="F=1-316"/>
</dbReference>
<dbReference type="PDB" id="9FSP">
    <property type="method" value="EM"/>
    <property type="resolution" value="3.39 A"/>
    <property type="chains" value="F=1-316"/>
</dbReference>
<dbReference type="PDB" id="9FSQ">
    <property type="method" value="EM"/>
    <property type="resolution" value="3.51 A"/>
    <property type="chains" value="F=1-316"/>
</dbReference>
<dbReference type="PDB" id="9FSR">
    <property type="method" value="EM"/>
    <property type="resolution" value="3.76 A"/>
    <property type="chains" value="F=1-316"/>
</dbReference>
<dbReference type="PDB" id="9FSS">
    <property type="method" value="EM"/>
    <property type="resolution" value="4.14 A"/>
    <property type="chains" value="F=1-316"/>
</dbReference>
<dbReference type="PDBsum" id="2DK5"/>
<dbReference type="PDBsum" id="2YU3"/>
<dbReference type="PDBsum" id="7A6H"/>
<dbReference type="PDBsum" id="7AE1"/>
<dbReference type="PDBsum" id="7AE3"/>
<dbReference type="PDBsum" id="7AEA"/>
<dbReference type="PDBsum" id="7AST"/>
<dbReference type="PDBsum" id="7D58"/>
<dbReference type="PDBsum" id="7D59"/>
<dbReference type="PDBsum" id="7DN3"/>
<dbReference type="PDBsum" id="7DU2"/>
<dbReference type="PDBsum" id="7FJI"/>
<dbReference type="PDBsum" id="7FJJ"/>
<dbReference type="PDBsum" id="8ITY"/>
<dbReference type="PDBsum" id="8IUE"/>
<dbReference type="PDBsum" id="8IUH"/>
<dbReference type="PDBsum" id="9FSO"/>
<dbReference type="PDBsum" id="9FSP"/>
<dbReference type="PDBsum" id="9FSQ"/>
<dbReference type="PDBsum" id="9FSR"/>
<dbReference type="PDBsum" id="9FSS"/>
<dbReference type="EMDB" id="EMD-11673"/>
<dbReference type="EMDB" id="EMD-11736"/>
<dbReference type="EMDB" id="EMD-11738"/>
<dbReference type="EMDB" id="EMD-11742"/>
<dbReference type="EMDB" id="EMD-11904"/>
<dbReference type="EMDB" id="EMD-30577"/>
<dbReference type="EMDB" id="EMD-30578"/>
<dbReference type="EMDB" id="EMD-30779"/>
<dbReference type="EMDB" id="EMD-30865"/>
<dbReference type="EMDB" id="EMD-31621"/>
<dbReference type="EMDB" id="EMD-31622"/>
<dbReference type="EMDB" id="EMD-35712"/>
<dbReference type="EMDB" id="EMD-35719"/>
<dbReference type="EMDB" id="EMD-35722"/>
<dbReference type="EMDB" id="EMD-50730"/>
<dbReference type="EMDB" id="EMD-50731"/>
<dbReference type="EMDB" id="EMD-50732"/>
<dbReference type="EMDB" id="EMD-50733"/>
<dbReference type="EMDB" id="EMD-50734"/>
<dbReference type="SMR" id="Q9H1D9"/>
<dbReference type="BioGRID" id="115866">
    <property type="interactions" value="66"/>
</dbReference>
<dbReference type="ComplexPortal" id="CPX-2393">
    <property type="entry name" value="DNA-directed RNA polymerase III complex, POLR3G variant"/>
</dbReference>
<dbReference type="ComplexPortal" id="CPX-7482">
    <property type="entry name" value="DNA-directed RNA polymerase III complex, POLR3GL variant"/>
</dbReference>
<dbReference type="CORUM" id="Q9H1D9"/>
<dbReference type="DIP" id="DIP-34646N"/>
<dbReference type="FunCoup" id="Q9H1D9">
    <property type="interactions" value="3600"/>
</dbReference>
<dbReference type="IntAct" id="Q9H1D9">
    <property type="interactions" value="69"/>
</dbReference>
<dbReference type="MINT" id="Q9H1D9"/>
<dbReference type="STRING" id="9606.ENSP00000366828"/>
<dbReference type="iPTMnet" id="Q9H1D9"/>
<dbReference type="MetOSite" id="Q9H1D9"/>
<dbReference type="PhosphoSitePlus" id="Q9H1D9"/>
<dbReference type="BioMuta" id="POLR3F"/>
<dbReference type="DMDM" id="20139728"/>
<dbReference type="jPOST" id="Q9H1D9"/>
<dbReference type="MassIVE" id="Q9H1D9"/>
<dbReference type="PaxDb" id="9606-ENSP00000366828"/>
<dbReference type="PeptideAtlas" id="Q9H1D9"/>
<dbReference type="ProteomicsDB" id="80402"/>
<dbReference type="Pumba" id="Q9H1D9"/>
<dbReference type="Antibodypedia" id="24572">
    <property type="antibodies" value="201 antibodies from 30 providers"/>
</dbReference>
<dbReference type="DNASU" id="10621"/>
<dbReference type="Ensembl" id="ENST00000377603.5">
    <property type="protein sequence ID" value="ENSP00000366828.4"/>
    <property type="gene ID" value="ENSG00000132664.13"/>
</dbReference>
<dbReference type="GeneID" id="10621"/>
<dbReference type="KEGG" id="hsa:10621"/>
<dbReference type="MANE-Select" id="ENST00000377603.5">
    <property type="protein sequence ID" value="ENSP00000366828.4"/>
    <property type="RefSeq nucleotide sequence ID" value="NM_006466.4"/>
    <property type="RefSeq protein sequence ID" value="NP_006457.2"/>
</dbReference>
<dbReference type="UCSC" id="uc002wqv.5">
    <property type="organism name" value="human"/>
</dbReference>
<dbReference type="AGR" id="HGNC:15763"/>
<dbReference type="CTD" id="10621"/>
<dbReference type="DisGeNET" id="10621"/>
<dbReference type="GeneCards" id="POLR3F"/>
<dbReference type="HGNC" id="HGNC:15763">
    <property type="gene designation" value="POLR3F"/>
</dbReference>
<dbReference type="HPA" id="ENSG00000132664">
    <property type="expression patterns" value="Low tissue specificity"/>
</dbReference>
<dbReference type="MalaCards" id="POLR3F"/>
<dbReference type="MIM" id="617455">
    <property type="type" value="gene"/>
</dbReference>
<dbReference type="MIM" id="619872">
    <property type="type" value="phenotype"/>
</dbReference>
<dbReference type="neXtProt" id="NX_Q9H1D9"/>
<dbReference type="OpenTargets" id="ENSG00000132664"/>
<dbReference type="PharmGKB" id="PA33520"/>
<dbReference type="VEuPathDB" id="HostDB:ENSG00000132664"/>
<dbReference type="eggNOG" id="KOG3233">
    <property type="taxonomic scope" value="Eukaryota"/>
</dbReference>
<dbReference type="GeneTree" id="ENSGT00390000009679"/>
<dbReference type="HOGENOM" id="CLU_033661_1_0_1"/>
<dbReference type="InParanoid" id="Q9H1D9"/>
<dbReference type="OMA" id="VGTTKKC"/>
<dbReference type="OrthoDB" id="613763at2759"/>
<dbReference type="PAN-GO" id="Q9H1D9">
    <property type="GO annotations" value="1 GO annotation based on evolutionary models"/>
</dbReference>
<dbReference type="PhylomeDB" id="Q9H1D9"/>
<dbReference type="TreeFam" id="TF103051"/>
<dbReference type="PathwayCommons" id="Q9H1D9"/>
<dbReference type="Reactome" id="R-HSA-1834949">
    <property type="pathway name" value="Cytosolic sensors of pathogen-associated DNA"/>
</dbReference>
<dbReference type="Reactome" id="R-HSA-73780">
    <property type="pathway name" value="RNA Polymerase III Chain Elongation"/>
</dbReference>
<dbReference type="Reactome" id="R-HSA-73980">
    <property type="pathway name" value="RNA Polymerase III Transcription Termination"/>
</dbReference>
<dbReference type="Reactome" id="R-HSA-749476">
    <property type="pathway name" value="RNA Polymerase III Abortive And Retractive Initiation"/>
</dbReference>
<dbReference type="Reactome" id="R-HSA-76061">
    <property type="pathway name" value="RNA Polymerase III Transcription Initiation From Type 1 Promoter"/>
</dbReference>
<dbReference type="Reactome" id="R-HSA-76066">
    <property type="pathway name" value="RNA Polymerase III Transcription Initiation From Type 2 Promoter"/>
</dbReference>
<dbReference type="Reactome" id="R-HSA-76071">
    <property type="pathway name" value="RNA Polymerase III Transcription Initiation From Type 3 Promoter"/>
</dbReference>
<dbReference type="SignaLink" id="Q9H1D9"/>
<dbReference type="SIGNOR" id="Q9H1D9"/>
<dbReference type="BioGRID-ORCS" id="10621">
    <property type="hits" value="718 hits in 1171 CRISPR screens"/>
</dbReference>
<dbReference type="ChiTaRS" id="POLR3F">
    <property type="organism name" value="human"/>
</dbReference>
<dbReference type="EvolutionaryTrace" id="Q9H1D9"/>
<dbReference type="GeneWiki" id="POLR3F"/>
<dbReference type="GenomeRNAi" id="10621"/>
<dbReference type="Pharos" id="Q9H1D9">
    <property type="development level" value="Tbio"/>
</dbReference>
<dbReference type="PRO" id="PR:Q9H1D9"/>
<dbReference type="Proteomes" id="UP000005640">
    <property type="component" value="Chromosome 20"/>
</dbReference>
<dbReference type="RNAct" id="Q9H1D9">
    <property type="molecule type" value="protein"/>
</dbReference>
<dbReference type="Bgee" id="ENSG00000132664">
    <property type="expression patterns" value="Expressed in cerebellar hemisphere and 148 other cell types or tissues"/>
</dbReference>
<dbReference type="GO" id="GO:0005829">
    <property type="term" value="C:cytosol"/>
    <property type="evidence" value="ECO:0000304"/>
    <property type="project" value="Reactome"/>
</dbReference>
<dbReference type="GO" id="GO:0005654">
    <property type="term" value="C:nucleoplasm"/>
    <property type="evidence" value="ECO:0000304"/>
    <property type="project" value="Reactome"/>
</dbReference>
<dbReference type="GO" id="GO:0005666">
    <property type="term" value="C:RNA polymerase III complex"/>
    <property type="evidence" value="ECO:0000314"/>
    <property type="project" value="UniProtKB"/>
</dbReference>
<dbReference type="GO" id="GO:0051539">
    <property type="term" value="F:4 iron, 4 sulfur cluster binding"/>
    <property type="evidence" value="ECO:0000314"/>
    <property type="project" value="UniProtKB"/>
</dbReference>
<dbReference type="GO" id="GO:0003899">
    <property type="term" value="F:DNA-directed RNA polymerase activity"/>
    <property type="evidence" value="ECO:0000303"/>
    <property type="project" value="UniProtKB"/>
</dbReference>
<dbReference type="GO" id="GO:0003690">
    <property type="term" value="F:double-stranded DNA binding"/>
    <property type="evidence" value="ECO:0000314"/>
    <property type="project" value="UniProtKB"/>
</dbReference>
<dbReference type="GO" id="GO:0051607">
    <property type="term" value="P:defense response to virus"/>
    <property type="evidence" value="ECO:0007669"/>
    <property type="project" value="UniProtKB-KW"/>
</dbReference>
<dbReference type="GO" id="GO:0045087">
    <property type="term" value="P:innate immune response"/>
    <property type="evidence" value="ECO:0007669"/>
    <property type="project" value="UniProtKB-KW"/>
</dbReference>
<dbReference type="GO" id="GO:0045089">
    <property type="term" value="P:positive regulation of innate immune response"/>
    <property type="evidence" value="ECO:0000315"/>
    <property type="project" value="UniProtKB"/>
</dbReference>
<dbReference type="GO" id="GO:0032728">
    <property type="term" value="P:positive regulation of interferon-beta production"/>
    <property type="evidence" value="ECO:0000315"/>
    <property type="project" value="UniProtKB"/>
</dbReference>
<dbReference type="GO" id="GO:0006359">
    <property type="term" value="P:regulation of transcription by RNA polymerase III"/>
    <property type="evidence" value="ECO:0000303"/>
    <property type="project" value="UniProtKB"/>
</dbReference>
<dbReference type="GO" id="GO:0006383">
    <property type="term" value="P:transcription by RNA polymerase III"/>
    <property type="evidence" value="ECO:0007669"/>
    <property type="project" value="InterPro"/>
</dbReference>
<dbReference type="FunFam" id="1.10.10.10:FF:000116">
    <property type="entry name" value="DNA-directed RNA polymerase III subunit RPC6"/>
    <property type="match status" value="1"/>
</dbReference>
<dbReference type="FunFam" id="1.10.10.10:FF:000237">
    <property type="entry name" value="DNA-directed RNA polymerase III subunit RPC6"/>
    <property type="match status" value="1"/>
</dbReference>
<dbReference type="Gene3D" id="1.10.10.10">
    <property type="entry name" value="Winged helix-like DNA-binding domain superfamily/Winged helix DNA-binding domain"/>
    <property type="match status" value="2"/>
</dbReference>
<dbReference type="InterPro" id="IPR007832">
    <property type="entry name" value="RNA_pol_Rpc34"/>
</dbReference>
<dbReference type="InterPro" id="IPR016049">
    <property type="entry name" value="RNA_pol_Rpc34-like"/>
</dbReference>
<dbReference type="InterPro" id="IPR036388">
    <property type="entry name" value="WH-like_DNA-bd_sf"/>
</dbReference>
<dbReference type="InterPro" id="IPR036390">
    <property type="entry name" value="WH_DNA-bd_sf"/>
</dbReference>
<dbReference type="PANTHER" id="PTHR12780">
    <property type="entry name" value="RNA POLYMERASE III DNA DIRECTED , 39KD SUBUNIT-RELATED"/>
    <property type="match status" value="1"/>
</dbReference>
<dbReference type="Pfam" id="PF05158">
    <property type="entry name" value="RNA_pol_Rpc34"/>
    <property type="match status" value="1"/>
</dbReference>
<dbReference type="PIRSF" id="PIRSF028763">
    <property type="entry name" value="RNA_pol_Rpc34"/>
    <property type="match status" value="1"/>
</dbReference>
<dbReference type="SUPFAM" id="SSF46785">
    <property type="entry name" value="Winged helix' DNA-binding domain"/>
    <property type="match status" value="2"/>
</dbReference>